<keyword id="KW-0687">Ribonucleoprotein</keyword>
<reference key="1">
    <citation type="journal article" date="2000" name="Proc. Natl. Acad. Sci. U.S.A.">
        <title>Archaeal adaptation to higher temperatures revealed by genomic sequence of Thermoplasma volcanium.</title>
        <authorList>
            <person name="Kawashima T."/>
            <person name="Amano N."/>
            <person name="Koike H."/>
            <person name="Makino S."/>
            <person name="Higuchi S."/>
            <person name="Kawashima-Ohya Y."/>
            <person name="Watanabe K."/>
            <person name="Yamazaki M."/>
            <person name="Kanehori K."/>
            <person name="Kawamoto T."/>
            <person name="Nunoshiba T."/>
            <person name="Yamamoto Y."/>
            <person name="Aramaki H."/>
            <person name="Makino K."/>
            <person name="Suzuki M."/>
        </authorList>
    </citation>
    <scope>NUCLEOTIDE SEQUENCE [LARGE SCALE GENOMIC DNA]</scope>
    <source>
        <strain>ATCC 51530 / DSM 4299 / JCM 9571 / NBRC 15438 / GSS1</strain>
    </source>
</reference>
<proteinExistence type="inferred from homology"/>
<comment type="similarity">
    <text evidence="2">Belongs to the snRNP Sm proteins family.</text>
</comment>
<comment type="sequence caution" evidence="2">
    <conflict type="erroneous initiation">
        <sequence resource="EMBL-CDS" id="BAB59502"/>
    </conflict>
</comment>
<organism>
    <name type="scientific">Thermoplasma volcanium (strain ATCC 51530 / DSM 4299 / JCM 9571 / NBRC 15438 / GSS1)</name>
    <dbReference type="NCBI Taxonomy" id="273116"/>
    <lineage>
        <taxon>Archaea</taxon>
        <taxon>Methanobacteriati</taxon>
        <taxon>Thermoplasmatota</taxon>
        <taxon>Thermoplasmata</taxon>
        <taxon>Thermoplasmatales</taxon>
        <taxon>Thermoplasmataceae</taxon>
        <taxon>Thermoplasma</taxon>
    </lineage>
</organism>
<evidence type="ECO:0000255" key="1">
    <source>
        <dbReference type="PROSITE-ProRule" id="PRU01346"/>
    </source>
</evidence>
<evidence type="ECO:0000305" key="2"/>
<protein>
    <recommendedName>
        <fullName>Putative snRNP Sm-like protein</fullName>
    </recommendedName>
</protein>
<sequence length="83" mass="9184">MPKTVANTKPMDVLKNALSRNVLIDVKGNREYSGILEGYDVYMNVVLQNASEIINGENKGVFDRILVRGDNVIFVSPSKGDNE</sequence>
<feature type="chain" id="PRO_0000125601" description="Putative snRNP Sm-like protein">
    <location>
        <begin position="1"/>
        <end position="83"/>
    </location>
</feature>
<feature type="domain" description="Sm" evidence="1">
    <location>
        <begin position="9"/>
        <end position="81"/>
    </location>
</feature>
<dbReference type="EMBL" id="BA000011">
    <property type="protein sequence ID" value="BAB59502.1"/>
    <property type="status" value="ALT_INIT"/>
    <property type="molecule type" value="Genomic_DNA"/>
</dbReference>
<dbReference type="RefSeq" id="WP_010916614.1">
    <property type="nucleotide sequence ID" value="NC_002689.2"/>
</dbReference>
<dbReference type="SMR" id="Q97BU5"/>
<dbReference type="STRING" id="273116.gene:9381137"/>
<dbReference type="PaxDb" id="273116-14324575"/>
<dbReference type="GeneID" id="1440872"/>
<dbReference type="KEGG" id="tvo:TVG0350334"/>
<dbReference type="eggNOG" id="arCOG00998">
    <property type="taxonomic scope" value="Archaea"/>
</dbReference>
<dbReference type="HOGENOM" id="CLU_076902_11_1_2"/>
<dbReference type="OrthoDB" id="371816at2157"/>
<dbReference type="PhylomeDB" id="Q97BU5"/>
<dbReference type="Proteomes" id="UP000001017">
    <property type="component" value="Chromosome"/>
</dbReference>
<dbReference type="GO" id="GO:1990904">
    <property type="term" value="C:ribonucleoprotein complex"/>
    <property type="evidence" value="ECO:0007669"/>
    <property type="project" value="UniProtKB-KW"/>
</dbReference>
<dbReference type="GO" id="GO:0120114">
    <property type="term" value="C:Sm-like protein family complex"/>
    <property type="evidence" value="ECO:0007669"/>
    <property type="project" value="UniProtKB-ARBA"/>
</dbReference>
<dbReference type="GO" id="GO:0003723">
    <property type="term" value="F:RNA binding"/>
    <property type="evidence" value="ECO:0007669"/>
    <property type="project" value="InterPro"/>
</dbReference>
<dbReference type="GO" id="GO:0000398">
    <property type="term" value="P:mRNA splicing, via spliceosome"/>
    <property type="evidence" value="ECO:0007669"/>
    <property type="project" value="InterPro"/>
</dbReference>
<dbReference type="CDD" id="cd01731">
    <property type="entry name" value="archaeal_Sm1"/>
    <property type="match status" value="1"/>
</dbReference>
<dbReference type="Gene3D" id="2.30.30.100">
    <property type="match status" value="1"/>
</dbReference>
<dbReference type="HAMAP" id="MF_00257">
    <property type="entry name" value="Lsm_RuxX"/>
    <property type="match status" value="1"/>
</dbReference>
<dbReference type="InterPro" id="IPR016487">
    <property type="entry name" value="Lsm6/sSmF"/>
</dbReference>
<dbReference type="InterPro" id="IPR010920">
    <property type="entry name" value="LSM_dom_sf"/>
</dbReference>
<dbReference type="InterPro" id="IPR047575">
    <property type="entry name" value="Sm"/>
</dbReference>
<dbReference type="InterPro" id="IPR001163">
    <property type="entry name" value="Sm_dom_euk/arc"/>
</dbReference>
<dbReference type="InterPro" id="IPR022901">
    <property type="entry name" value="snRNP_Sm-like_arc"/>
</dbReference>
<dbReference type="NCBIfam" id="NF001963">
    <property type="entry name" value="PRK00737.1"/>
    <property type="match status" value="1"/>
</dbReference>
<dbReference type="PANTHER" id="PTHR11021:SF0">
    <property type="entry name" value="SMALL NUCLEAR RIBONUCLEOPROTEIN F"/>
    <property type="match status" value="1"/>
</dbReference>
<dbReference type="PANTHER" id="PTHR11021">
    <property type="entry name" value="SMALL NUCLEAR RIBONUCLEOPROTEIN F SNRNP-F"/>
    <property type="match status" value="1"/>
</dbReference>
<dbReference type="Pfam" id="PF01423">
    <property type="entry name" value="LSM"/>
    <property type="match status" value="1"/>
</dbReference>
<dbReference type="PIRSF" id="PIRSF006609">
    <property type="entry name" value="snRNP_SmF"/>
    <property type="match status" value="1"/>
</dbReference>
<dbReference type="SMART" id="SM00651">
    <property type="entry name" value="Sm"/>
    <property type="match status" value="1"/>
</dbReference>
<dbReference type="SUPFAM" id="SSF50182">
    <property type="entry name" value="Sm-like ribonucleoproteins"/>
    <property type="match status" value="1"/>
</dbReference>
<dbReference type="PROSITE" id="PS52002">
    <property type="entry name" value="SM"/>
    <property type="match status" value="1"/>
</dbReference>
<name>RUXX_THEVO</name>
<gene>
    <name type="ordered locus">TV0360</name>
    <name type="ORF">TVG0350334</name>
</gene>
<accession>Q97BU5</accession>